<comment type="function">
    <text evidence="1">Chaperone involved in the correct folding and assembly of outer membrane proteins. Recognizes specific patterns of aromatic residues and the orientation of their side chains, which are found more frequently in integral outer membrane proteins. May act in both early periplasmic and late outer membrane-associated steps of protein maturation.</text>
</comment>
<comment type="catalytic activity">
    <reaction evidence="1">
        <text>[protein]-peptidylproline (omega=180) = [protein]-peptidylproline (omega=0)</text>
        <dbReference type="Rhea" id="RHEA:16237"/>
        <dbReference type="Rhea" id="RHEA-COMP:10747"/>
        <dbReference type="Rhea" id="RHEA-COMP:10748"/>
        <dbReference type="ChEBI" id="CHEBI:83833"/>
        <dbReference type="ChEBI" id="CHEBI:83834"/>
        <dbReference type="EC" id="5.2.1.8"/>
    </reaction>
</comment>
<comment type="subcellular location">
    <subcellularLocation>
        <location evidence="1">Periplasm</location>
    </subcellularLocation>
    <text evidence="1">Is capable of associating with the outer membrane.</text>
</comment>
<comment type="domain">
    <text evidence="1">The PPIase activity resides only in the second parvulin domain. The N-terminal region and the C-terminal tail are necessary and sufficient for the chaperone activity of SurA. The PPIase activity is dispensable for SurA to function as a chaperone. The N-terminal region and the C-terminal tail are also required for porin recognition.</text>
</comment>
<feature type="signal peptide" evidence="1">
    <location>
        <begin position="1"/>
        <end position="36"/>
    </location>
</feature>
<feature type="chain" id="PRO_0000270032" description="Chaperone SurA">
    <location>
        <begin position="37"/>
        <end position="499"/>
    </location>
</feature>
<feature type="domain" description="PpiC 1" evidence="1">
    <location>
        <begin position="231"/>
        <end position="333"/>
    </location>
</feature>
<feature type="domain" description="PpiC 2" evidence="1">
    <location>
        <begin position="352"/>
        <end position="450"/>
    </location>
</feature>
<organism>
    <name type="scientific">Cupriavidus pinatubonensis (strain JMP 134 / LMG 1197)</name>
    <name type="common">Cupriavidus necator (strain JMP 134)</name>
    <dbReference type="NCBI Taxonomy" id="264198"/>
    <lineage>
        <taxon>Bacteria</taxon>
        <taxon>Pseudomonadati</taxon>
        <taxon>Pseudomonadota</taxon>
        <taxon>Betaproteobacteria</taxon>
        <taxon>Burkholderiales</taxon>
        <taxon>Burkholderiaceae</taxon>
        <taxon>Cupriavidus</taxon>
    </lineage>
</organism>
<dbReference type="EC" id="5.2.1.8" evidence="1"/>
<dbReference type="EMBL" id="CP000090">
    <property type="protein sequence ID" value="AAZ59880.1"/>
    <property type="molecule type" value="Genomic_DNA"/>
</dbReference>
<dbReference type="SMR" id="Q475Q3"/>
<dbReference type="STRING" id="264198.Reut_A0498"/>
<dbReference type="KEGG" id="reu:Reut_A0498"/>
<dbReference type="eggNOG" id="COG0760">
    <property type="taxonomic scope" value="Bacteria"/>
</dbReference>
<dbReference type="HOGENOM" id="CLU_034646_11_0_4"/>
<dbReference type="OrthoDB" id="14196at2"/>
<dbReference type="GO" id="GO:0030288">
    <property type="term" value="C:outer membrane-bounded periplasmic space"/>
    <property type="evidence" value="ECO:0007669"/>
    <property type="project" value="InterPro"/>
</dbReference>
<dbReference type="GO" id="GO:0042277">
    <property type="term" value="F:peptide binding"/>
    <property type="evidence" value="ECO:0007669"/>
    <property type="project" value="InterPro"/>
</dbReference>
<dbReference type="GO" id="GO:0003755">
    <property type="term" value="F:peptidyl-prolyl cis-trans isomerase activity"/>
    <property type="evidence" value="ECO:0007669"/>
    <property type="project" value="UniProtKB-UniRule"/>
</dbReference>
<dbReference type="GO" id="GO:0051082">
    <property type="term" value="F:unfolded protein binding"/>
    <property type="evidence" value="ECO:0007669"/>
    <property type="project" value="UniProtKB-UniRule"/>
</dbReference>
<dbReference type="GO" id="GO:0043165">
    <property type="term" value="P:Gram-negative-bacterium-type cell outer membrane assembly"/>
    <property type="evidence" value="ECO:0007669"/>
    <property type="project" value="InterPro"/>
</dbReference>
<dbReference type="GO" id="GO:0006457">
    <property type="term" value="P:protein folding"/>
    <property type="evidence" value="ECO:0007669"/>
    <property type="project" value="UniProtKB-UniRule"/>
</dbReference>
<dbReference type="GO" id="GO:0050821">
    <property type="term" value="P:protein stabilization"/>
    <property type="evidence" value="ECO:0007669"/>
    <property type="project" value="InterPro"/>
</dbReference>
<dbReference type="Gene3D" id="3.10.50.40">
    <property type="match status" value="2"/>
</dbReference>
<dbReference type="Gene3D" id="1.10.4030.10">
    <property type="entry name" value="Porin chaperone SurA, peptide-binding domain"/>
    <property type="match status" value="1"/>
</dbReference>
<dbReference type="HAMAP" id="MF_01183">
    <property type="entry name" value="Chaperone_SurA"/>
    <property type="match status" value="1"/>
</dbReference>
<dbReference type="InterPro" id="IPR050280">
    <property type="entry name" value="OMP_Chaperone_SurA"/>
</dbReference>
<dbReference type="InterPro" id="IPR046357">
    <property type="entry name" value="PPIase_dom_sf"/>
</dbReference>
<dbReference type="InterPro" id="IPR000297">
    <property type="entry name" value="PPIase_PpiC"/>
</dbReference>
<dbReference type="InterPro" id="IPR023058">
    <property type="entry name" value="PPIase_PpiC_CS"/>
</dbReference>
<dbReference type="InterPro" id="IPR023034">
    <property type="entry name" value="PPIase_SurA"/>
</dbReference>
<dbReference type="InterPro" id="IPR015391">
    <property type="entry name" value="SurA_N"/>
</dbReference>
<dbReference type="InterPro" id="IPR027304">
    <property type="entry name" value="Trigger_fact/SurA_dom_sf"/>
</dbReference>
<dbReference type="PANTHER" id="PTHR47637">
    <property type="entry name" value="CHAPERONE SURA"/>
    <property type="match status" value="1"/>
</dbReference>
<dbReference type="PANTHER" id="PTHR47637:SF1">
    <property type="entry name" value="CHAPERONE SURA"/>
    <property type="match status" value="1"/>
</dbReference>
<dbReference type="Pfam" id="PF00639">
    <property type="entry name" value="Rotamase"/>
    <property type="match status" value="1"/>
</dbReference>
<dbReference type="Pfam" id="PF13616">
    <property type="entry name" value="Rotamase_3"/>
    <property type="match status" value="1"/>
</dbReference>
<dbReference type="Pfam" id="PF09312">
    <property type="entry name" value="SurA_N"/>
    <property type="match status" value="1"/>
</dbReference>
<dbReference type="SUPFAM" id="SSF54534">
    <property type="entry name" value="FKBP-like"/>
    <property type="match status" value="2"/>
</dbReference>
<dbReference type="SUPFAM" id="SSF109998">
    <property type="entry name" value="Triger factor/SurA peptide-binding domain-like"/>
    <property type="match status" value="1"/>
</dbReference>
<dbReference type="PROSITE" id="PS01096">
    <property type="entry name" value="PPIC_PPIASE_1"/>
    <property type="match status" value="1"/>
</dbReference>
<dbReference type="PROSITE" id="PS50198">
    <property type="entry name" value="PPIC_PPIASE_2"/>
    <property type="match status" value="2"/>
</dbReference>
<proteinExistence type="inferred from homology"/>
<name>SURA_CUPPJ</name>
<keyword id="KW-0143">Chaperone</keyword>
<keyword id="KW-0413">Isomerase</keyword>
<keyword id="KW-0574">Periplasm</keyword>
<keyword id="KW-0677">Repeat</keyword>
<keyword id="KW-0697">Rotamase</keyword>
<keyword id="KW-0732">Signal</keyword>
<evidence type="ECO:0000255" key="1">
    <source>
        <dbReference type="HAMAP-Rule" id="MF_01183"/>
    </source>
</evidence>
<accession>Q475Q3</accession>
<gene>
    <name evidence="1" type="primary">surA</name>
    <name type="ordered locus">Reut_A0498</name>
</gene>
<sequence>MKRQEFALFSLTLMLSPWRRVLLPAVLAAMAGPALAQLKAPSQASRATGIFVPQSSDVAVPSSQPQLGVPQPSSGGKRSQLVDEVVAVVNNSVITRRELLDRADEIEAQLRTANRPAPPRADLLGEVLERLIMERVQTQAAQDAGIKVTDQELDRAIESVAQQNRLSATELRRRVEASGMTWTKYRDELRKQVQVIRLREREVDSKVQVYDGEIDNYLAARGGQGAAATGPTEFNVSQILVRVPENASDAQKQELQKKAEQLLKQAQGGADFAQLAQANSQGPEAAQGGAIGFREIGRLPALFANAVVDLQPGAVAPEVVESANGFHILKLTAKRVAPASTSASSPAAASRITQTQVRHILIRTGPNMPEAEARRQLGTLRDRITHGGDFADAAKRFSQDGSAQAGGELGWVSPGELVPEFEQAMNRLRPGEISEPVVTQFGVHLIQVENRRETEMAPEKQRDFARAEIREQKLRAAYDDWVRQLRSQAYVEYRVNRQR</sequence>
<reference key="1">
    <citation type="journal article" date="2010" name="PLoS ONE">
        <title>The complete multipartite genome sequence of Cupriavidus necator JMP134, a versatile pollutant degrader.</title>
        <authorList>
            <person name="Lykidis A."/>
            <person name="Perez-Pantoja D."/>
            <person name="Ledger T."/>
            <person name="Mavromatis K."/>
            <person name="Anderson I.J."/>
            <person name="Ivanova N.N."/>
            <person name="Hooper S.D."/>
            <person name="Lapidus A."/>
            <person name="Lucas S."/>
            <person name="Gonzalez B."/>
            <person name="Kyrpides N.C."/>
        </authorList>
    </citation>
    <scope>NUCLEOTIDE SEQUENCE [LARGE SCALE GENOMIC DNA]</scope>
    <source>
        <strain>JMP134 / LMG 1197</strain>
    </source>
</reference>
<protein>
    <recommendedName>
        <fullName evidence="1">Chaperone SurA</fullName>
    </recommendedName>
    <alternativeName>
        <fullName evidence="1">Peptidyl-prolyl cis-trans isomerase SurA</fullName>
        <shortName evidence="1">PPIase SurA</shortName>
        <ecNumber evidence="1">5.2.1.8</ecNumber>
    </alternativeName>
    <alternativeName>
        <fullName evidence="1">Rotamase SurA</fullName>
    </alternativeName>
</protein>